<dbReference type="EC" id="2.7.1.33" evidence="1"/>
<dbReference type="EMBL" id="CR626927">
    <property type="protein sequence ID" value="CAH06727.1"/>
    <property type="molecule type" value="Genomic_DNA"/>
</dbReference>
<dbReference type="RefSeq" id="WP_005801193.1">
    <property type="nucleotide sequence ID" value="NZ_UFTH01000001.1"/>
</dbReference>
<dbReference type="SMR" id="Q5LGL2"/>
<dbReference type="PaxDb" id="272559-BF9343_0946"/>
<dbReference type="KEGG" id="bfs:BF9343_0946"/>
<dbReference type="eggNOG" id="COG1521">
    <property type="taxonomic scope" value="Bacteria"/>
</dbReference>
<dbReference type="HOGENOM" id="CLU_066627_2_0_10"/>
<dbReference type="UniPathway" id="UPA00241">
    <property type="reaction ID" value="UER00352"/>
</dbReference>
<dbReference type="Proteomes" id="UP000006731">
    <property type="component" value="Chromosome"/>
</dbReference>
<dbReference type="GO" id="GO:0005737">
    <property type="term" value="C:cytoplasm"/>
    <property type="evidence" value="ECO:0007669"/>
    <property type="project" value="UniProtKB-SubCell"/>
</dbReference>
<dbReference type="GO" id="GO:0005524">
    <property type="term" value="F:ATP binding"/>
    <property type="evidence" value="ECO:0007669"/>
    <property type="project" value="UniProtKB-UniRule"/>
</dbReference>
<dbReference type="GO" id="GO:0046872">
    <property type="term" value="F:metal ion binding"/>
    <property type="evidence" value="ECO:0007669"/>
    <property type="project" value="UniProtKB-KW"/>
</dbReference>
<dbReference type="GO" id="GO:0004594">
    <property type="term" value="F:pantothenate kinase activity"/>
    <property type="evidence" value="ECO:0007669"/>
    <property type="project" value="UniProtKB-UniRule"/>
</dbReference>
<dbReference type="GO" id="GO:0015937">
    <property type="term" value="P:coenzyme A biosynthetic process"/>
    <property type="evidence" value="ECO:0007669"/>
    <property type="project" value="UniProtKB-UniRule"/>
</dbReference>
<dbReference type="CDD" id="cd24015">
    <property type="entry name" value="ASKHA_NBD_PanK-III"/>
    <property type="match status" value="1"/>
</dbReference>
<dbReference type="Gene3D" id="3.30.420.40">
    <property type="match status" value="1"/>
</dbReference>
<dbReference type="HAMAP" id="MF_01274">
    <property type="entry name" value="Pantothen_kinase_3"/>
    <property type="match status" value="1"/>
</dbReference>
<dbReference type="InterPro" id="IPR043129">
    <property type="entry name" value="ATPase_NBD"/>
</dbReference>
<dbReference type="InterPro" id="IPR004619">
    <property type="entry name" value="Type_III_PanK"/>
</dbReference>
<dbReference type="NCBIfam" id="TIGR00671">
    <property type="entry name" value="baf"/>
    <property type="match status" value="1"/>
</dbReference>
<dbReference type="NCBIfam" id="NF009854">
    <property type="entry name" value="PRK13320.1-6"/>
    <property type="match status" value="1"/>
</dbReference>
<dbReference type="PANTHER" id="PTHR34265">
    <property type="entry name" value="TYPE III PANTOTHENATE KINASE"/>
    <property type="match status" value="1"/>
</dbReference>
<dbReference type="PANTHER" id="PTHR34265:SF1">
    <property type="entry name" value="TYPE III PANTOTHENATE KINASE"/>
    <property type="match status" value="1"/>
</dbReference>
<dbReference type="Pfam" id="PF03309">
    <property type="entry name" value="Pan_kinase"/>
    <property type="match status" value="1"/>
</dbReference>
<dbReference type="SUPFAM" id="SSF53067">
    <property type="entry name" value="Actin-like ATPase domain"/>
    <property type="match status" value="2"/>
</dbReference>
<feature type="chain" id="PRO_0000270862" description="Type III pantothenate kinase">
    <location>
        <begin position="1"/>
        <end position="243"/>
    </location>
</feature>
<feature type="active site" description="Proton acceptor" evidence="1">
    <location>
        <position position="95"/>
    </location>
</feature>
<feature type="binding site" evidence="1">
    <location>
        <begin position="6"/>
        <end position="13"/>
    </location>
    <ligand>
        <name>ATP</name>
        <dbReference type="ChEBI" id="CHEBI:30616"/>
    </ligand>
</feature>
<feature type="binding site" evidence="1">
    <location>
        <position position="86"/>
    </location>
    <ligand>
        <name>substrate</name>
    </ligand>
</feature>
<feature type="binding site" evidence="1">
    <location>
        <begin position="93"/>
        <end position="96"/>
    </location>
    <ligand>
        <name>substrate</name>
    </ligand>
</feature>
<feature type="binding site" evidence="1">
    <location>
        <position position="116"/>
    </location>
    <ligand>
        <name>K(+)</name>
        <dbReference type="ChEBI" id="CHEBI:29103"/>
    </ligand>
</feature>
<feature type="binding site" evidence="1">
    <location>
        <position position="119"/>
    </location>
    <ligand>
        <name>ATP</name>
        <dbReference type="ChEBI" id="CHEBI:30616"/>
    </ligand>
</feature>
<feature type="binding site" evidence="1">
    <location>
        <position position="171"/>
    </location>
    <ligand>
        <name>substrate</name>
    </ligand>
</feature>
<comment type="function">
    <text evidence="1">Catalyzes the phosphorylation of pantothenate (Pan), the first step in CoA biosynthesis.</text>
</comment>
<comment type="catalytic activity">
    <reaction evidence="1">
        <text>(R)-pantothenate + ATP = (R)-4'-phosphopantothenate + ADP + H(+)</text>
        <dbReference type="Rhea" id="RHEA:16373"/>
        <dbReference type="ChEBI" id="CHEBI:10986"/>
        <dbReference type="ChEBI" id="CHEBI:15378"/>
        <dbReference type="ChEBI" id="CHEBI:29032"/>
        <dbReference type="ChEBI" id="CHEBI:30616"/>
        <dbReference type="ChEBI" id="CHEBI:456216"/>
        <dbReference type="EC" id="2.7.1.33"/>
    </reaction>
</comment>
<comment type="cofactor">
    <cofactor evidence="1">
        <name>NH4(+)</name>
        <dbReference type="ChEBI" id="CHEBI:28938"/>
    </cofactor>
    <cofactor evidence="1">
        <name>K(+)</name>
        <dbReference type="ChEBI" id="CHEBI:29103"/>
    </cofactor>
    <text evidence="1">A monovalent cation. Ammonium or potassium.</text>
</comment>
<comment type="pathway">
    <text evidence="1">Cofactor biosynthesis; coenzyme A biosynthesis; CoA from (R)-pantothenate: step 1/5.</text>
</comment>
<comment type="subunit">
    <text evidence="1">Homodimer.</text>
</comment>
<comment type="subcellular location">
    <subcellularLocation>
        <location evidence="1">Cytoplasm</location>
    </subcellularLocation>
</comment>
<comment type="similarity">
    <text evidence="1">Belongs to the type III pantothenate kinase family.</text>
</comment>
<keyword id="KW-0067">ATP-binding</keyword>
<keyword id="KW-0173">Coenzyme A biosynthesis</keyword>
<keyword id="KW-0963">Cytoplasm</keyword>
<keyword id="KW-0418">Kinase</keyword>
<keyword id="KW-0479">Metal-binding</keyword>
<keyword id="KW-0547">Nucleotide-binding</keyword>
<keyword id="KW-0630">Potassium</keyword>
<keyword id="KW-0808">Transferase</keyword>
<reference key="1">
    <citation type="journal article" date="2005" name="Science">
        <title>Extensive DNA inversions in the B. fragilis genome control variable gene expression.</title>
        <authorList>
            <person name="Cerdeno-Tarraga A.-M."/>
            <person name="Patrick S."/>
            <person name="Crossman L.C."/>
            <person name="Blakely G."/>
            <person name="Abratt V."/>
            <person name="Lennard N."/>
            <person name="Poxton I."/>
            <person name="Duerden B."/>
            <person name="Harris B."/>
            <person name="Quail M.A."/>
            <person name="Barron A."/>
            <person name="Clark L."/>
            <person name="Corton C."/>
            <person name="Doggett J."/>
            <person name="Holden M.T.G."/>
            <person name="Larke N."/>
            <person name="Line A."/>
            <person name="Lord A."/>
            <person name="Norbertczak H."/>
            <person name="Ormond D."/>
            <person name="Price C."/>
            <person name="Rabbinowitsch E."/>
            <person name="Woodward J."/>
            <person name="Barrell B.G."/>
            <person name="Parkhill J."/>
        </authorList>
    </citation>
    <scope>NUCLEOTIDE SEQUENCE [LARGE SCALE GENOMIC DNA]</scope>
    <source>
        <strain>ATCC 25285 / DSM 2151 / CCUG 4856 / JCM 11019 / LMG 10263 / NCTC 9343 / Onslow / VPI 2553 / EN-2</strain>
    </source>
</reference>
<proteinExistence type="inferred from homology"/>
<name>COAX_BACFN</name>
<evidence type="ECO:0000255" key="1">
    <source>
        <dbReference type="HAMAP-Rule" id="MF_01274"/>
    </source>
</evidence>
<organism>
    <name type="scientific">Bacteroides fragilis (strain ATCC 25285 / DSM 2151 / CCUG 4856 / JCM 11019 / LMG 10263 / NCTC 9343 / Onslow / VPI 2553 / EN-2)</name>
    <dbReference type="NCBI Taxonomy" id="272559"/>
    <lineage>
        <taxon>Bacteria</taxon>
        <taxon>Pseudomonadati</taxon>
        <taxon>Bacteroidota</taxon>
        <taxon>Bacteroidia</taxon>
        <taxon>Bacteroidales</taxon>
        <taxon>Bacteroidaceae</taxon>
        <taxon>Bacteroides</taxon>
    </lineage>
</organism>
<protein>
    <recommendedName>
        <fullName evidence="1">Type III pantothenate kinase</fullName>
        <ecNumber evidence="1">2.7.1.33</ecNumber>
    </recommendedName>
    <alternativeName>
        <fullName evidence="1">PanK-III</fullName>
    </alternativeName>
    <alternativeName>
        <fullName evidence="1">Pantothenic acid kinase</fullName>
    </alternativeName>
</protein>
<sequence>MNLIIDIGNTVAKVALFDRTSMVEVVYDSNQSLDSLEAVCNKYDVRKAIVATVIDLNECVLAQLNKLPVPVLWLDSHTPLPVINLYETPETLGYDRMAAVVAAHDQFPGKDILVIDAGTCITYEFVDSLGQYHGGNISPGLWMRLKALHQFTGRLPLVHAEGRMPDMGKDTETAIRAGVKKGIEYEITGYIAAMKHKYPELLVFLTGGDDFSFDTKLKSVIFADRFLVLKGLNRILNYNNGRI</sequence>
<accession>Q5LGL2</accession>
<gene>
    <name evidence="1" type="primary">coaX</name>
    <name type="ordered locus">BF0989</name>
</gene>